<sequence length="175" mass="18205">MSQALTLARPYGRAAFAIAREGGTFAPWSDALAFSAQVAGDPRVAALLLNPALGQEQAVTLLAPPQAGEDYLRFLGVLADAQRLSLLPEVAGLYEHLRAEAEHVVKATVTSAAAMSQTELDTIAAALKKRFGRDVDITTAVDASLIGGAVIDTGDVVIDGSLKGKLARLQSSLAH</sequence>
<feature type="chain" id="PRO_1000184839" description="ATP synthase subunit delta">
    <location>
        <begin position="1"/>
        <end position="175"/>
    </location>
</feature>
<reference key="1">
    <citation type="journal article" date="2005" name="Nucleic Acids Res.">
        <title>The genome sequence of Xanthomonas oryzae pathovar oryzae KACC10331, the bacterial blight pathogen of rice.</title>
        <authorList>
            <person name="Lee B.-M."/>
            <person name="Park Y.-J."/>
            <person name="Park D.-S."/>
            <person name="Kang H.-W."/>
            <person name="Kim J.-G."/>
            <person name="Song E.-S."/>
            <person name="Park I.-C."/>
            <person name="Yoon U.-H."/>
            <person name="Hahn J.-H."/>
            <person name="Koo B.-S."/>
            <person name="Lee G.-B."/>
            <person name="Kim H."/>
            <person name="Park H.-S."/>
            <person name="Yoon K.-O."/>
            <person name="Kim J.-H."/>
            <person name="Jung C.-H."/>
            <person name="Koh N.-H."/>
            <person name="Seo J.-S."/>
            <person name="Go S.-J."/>
        </authorList>
    </citation>
    <scope>NUCLEOTIDE SEQUENCE [LARGE SCALE GENOMIC DNA]</scope>
    <source>
        <strain>KACC10331 / KXO85</strain>
    </source>
</reference>
<keyword id="KW-0066">ATP synthesis</keyword>
<keyword id="KW-0997">Cell inner membrane</keyword>
<keyword id="KW-1003">Cell membrane</keyword>
<keyword id="KW-0139">CF(1)</keyword>
<keyword id="KW-0375">Hydrogen ion transport</keyword>
<keyword id="KW-0406">Ion transport</keyword>
<keyword id="KW-0472">Membrane</keyword>
<keyword id="KW-1185">Reference proteome</keyword>
<keyword id="KW-0813">Transport</keyword>
<dbReference type="EMBL" id="AE013598">
    <property type="protein sequence ID" value="AAW73983.1"/>
    <property type="molecule type" value="Genomic_DNA"/>
</dbReference>
<dbReference type="SMR" id="Q5H4Y7"/>
<dbReference type="STRING" id="291331.XOO0729"/>
<dbReference type="KEGG" id="xoo:XOO0729"/>
<dbReference type="HOGENOM" id="CLU_085114_3_0_6"/>
<dbReference type="Proteomes" id="UP000006735">
    <property type="component" value="Chromosome"/>
</dbReference>
<dbReference type="GO" id="GO:0005886">
    <property type="term" value="C:plasma membrane"/>
    <property type="evidence" value="ECO:0007669"/>
    <property type="project" value="UniProtKB-SubCell"/>
</dbReference>
<dbReference type="GO" id="GO:0045259">
    <property type="term" value="C:proton-transporting ATP synthase complex"/>
    <property type="evidence" value="ECO:0007669"/>
    <property type="project" value="UniProtKB-KW"/>
</dbReference>
<dbReference type="GO" id="GO:0046933">
    <property type="term" value="F:proton-transporting ATP synthase activity, rotational mechanism"/>
    <property type="evidence" value="ECO:0007669"/>
    <property type="project" value="UniProtKB-UniRule"/>
</dbReference>
<dbReference type="Gene3D" id="1.10.520.20">
    <property type="entry name" value="N-terminal domain of the delta subunit of the F1F0-ATP synthase"/>
    <property type="match status" value="1"/>
</dbReference>
<dbReference type="HAMAP" id="MF_01416">
    <property type="entry name" value="ATP_synth_delta_bact"/>
    <property type="match status" value="1"/>
</dbReference>
<dbReference type="InterPro" id="IPR026015">
    <property type="entry name" value="ATP_synth_OSCP/delta_N_sf"/>
</dbReference>
<dbReference type="InterPro" id="IPR000711">
    <property type="entry name" value="ATPase_OSCP/dsu"/>
</dbReference>
<dbReference type="NCBIfam" id="TIGR01145">
    <property type="entry name" value="ATP_synt_delta"/>
    <property type="match status" value="1"/>
</dbReference>
<dbReference type="NCBIfam" id="NF004402">
    <property type="entry name" value="PRK05758.2-2"/>
    <property type="match status" value="1"/>
</dbReference>
<dbReference type="PANTHER" id="PTHR11910">
    <property type="entry name" value="ATP SYNTHASE DELTA CHAIN"/>
    <property type="match status" value="1"/>
</dbReference>
<dbReference type="Pfam" id="PF00213">
    <property type="entry name" value="OSCP"/>
    <property type="match status" value="1"/>
</dbReference>
<dbReference type="PRINTS" id="PR00125">
    <property type="entry name" value="ATPASEDELTA"/>
</dbReference>
<dbReference type="SUPFAM" id="SSF47928">
    <property type="entry name" value="N-terminal domain of the delta subunit of the F1F0-ATP synthase"/>
    <property type="match status" value="1"/>
</dbReference>
<gene>
    <name evidence="1" type="primary">atpH</name>
    <name type="ordered locus">XOO0729</name>
</gene>
<name>ATPD_XANOR</name>
<proteinExistence type="inferred from homology"/>
<organism>
    <name type="scientific">Xanthomonas oryzae pv. oryzae (strain KACC10331 / KXO85)</name>
    <dbReference type="NCBI Taxonomy" id="291331"/>
    <lineage>
        <taxon>Bacteria</taxon>
        <taxon>Pseudomonadati</taxon>
        <taxon>Pseudomonadota</taxon>
        <taxon>Gammaproteobacteria</taxon>
        <taxon>Lysobacterales</taxon>
        <taxon>Lysobacteraceae</taxon>
        <taxon>Xanthomonas</taxon>
    </lineage>
</organism>
<evidence type="ECO:0000255" key="1">
    <source>
        <dbReference type="HAMAP-Rule" id="MF_01416"/>
    </source>
</evidence>
<comment type="function">
    <text evidence="1">F(1)F(0) ATP synthase produces ATP from ADP in the presence of a proton or sodium gradient. F-type ATPases consist of two structural domains, F(1) containing the extramembraneous catalytic core and F(0) containing the membrane proton channel, linked together by a central stalk and a peripheral stalk. During catalysis, ATP synthesis in the catalytic domain of F(1) is coupled via a rotary mechanism of the central stalk subunits to proton translocation.</text>
</comment>
<comment type="function">
    <text evidence="1">This protein is part of the stalk that links CF(0) to CF(1). It either transmits conformational changes from CF(0) to CF(1) or is implicated in proton conduction.</text>
</comment>
<comment type="subunit">
    <text evidence="1">F-type ATPases have 2 components, F(1) - the catalytic core - and F(0) - the membrane proton channel. F(1) has five subunits: alpha(3), beta(3), gamma(1), delta(1), epsilon(1). F(0) has three main subunits: a(1), b(2) and c(10-14). The alpha and beta chains form an alternating ring which encloses part of the gamma chain. F(1) is attached to F(0) by a central stalk formed by the gamma and epsilon chains, while a peripheral stalk is formed by the delta and b chains.</text>
</comment>
<comment type="subcellular location">
    <subcellularLocation>
        <location evidence="1">Cell inner membrane</location>
        <topology evidence="1">Peripheral membrane protein</topology>
    </subcellularLocation>
</comment>
<comment type="similarity">
    <text evidence="1">Belongs to the ATPase delta chain family.</text>
</comment>
<accession>Q5H4Y7</accession>
<protein>
    <recommendedName>
        <fullName evidence="1">ATP synthase subunit delta</fullName>
    </recommendedName>
    <alternativeName>
        <fullName evidence="1">ATP synthase F(1) sector subunit delta</fullName>
    </alternativeName>
    <alternativeName>
        <fullName evidence="1">F-type ATPase subunit delta</fullName>
        <shortName evidence="1">F-ATPase subunit delta</shortName>
    </alternativeName>
</protein>